<dbReference type="EMBL" id="AM942759">
    <property type="protein sequence ID" value="CAR46005.1"/>
    <property type="molecule type" value="Genomic_DNA"/>
</dbReference>
<dbReference type="RefSeq" id="WP_012368607.1">
    <property type="nucleotide sequence ID" value="NC_010554.1"/>
</dbReference>
<dbReference type="SMR" id="B4F0D8"/>
<dbReference type="EnsemblBacteria" id="CAR46005">
    <property type="protein sequence ID" value="CAR46005"/>
    <property type="gene ID" value="PMI3055"/>
</dbReference>
<dbReference type="GeneID" id="6800136"/>
<dbReference type="KEGG" id="pmr:PMI3055"/>
<dbReference type="PATRIC" id="fig|529507.6.peg.2986"/>
<dbReference type="eggNOG" id="COG0445">
    <property type="taxonomic scope" value="Bacteria"/>
</dbReference>
<dbReference type="HOGENOM" id="CLU_007831_2_2_6"/>
<dbReference type="Proteomes" id="UP000008319">
    <property type="component" value="Chromosome"/>
</dbReference>
<dbReference type="GO" id="GO:0005829">
    <property type="term" value="C:cytosol"/>
    <property type="evidence" value="ECO:0007669"/>
    <property type="project" value="TreeGrafter"/>
</dbReference>
<dbReference type="GO" id="GO:0050660">
    <property type="term" value="F:flavin adenine dinucleotide binding"/>
    <property type="evidence" value="ECO:0007669"/>
    <property type="project" value="UniProtKB-UniRule"/>
</dbReference>
<dbReference type="GO" id="GO:0030488">
    <property type="term" value="P:tRNA methylation"/>
    <property type="evidence" value="ECO:0007669"/>
    <property type="project" value="TreeGrafter"/>
</dbReference>
<dbReference type="GO" id="GO:0002098">
    <property type="term" value="P:tRNA wobble uridine modification"/>
    <property type="evidence" value="ECO:0007669"/>
    <property type="project" value="InterPro"/>
</dbReference>
<dbReference type="FunFam" id="1.10.10.1800:FF:000001">
    <property type="entry name" value="tRNA uridine 5-carboxymethylaminomethyl modification enzyme MnmG"/>
    <property type="match status" value="1"/>
</dbReference>
<dbReference type="FunFam" id="1.10.150.570:FF:000001">
    <property type="entry name" value="tRNA uridine 5-carboxymethylaminomethyl modification enzyme MnmG"/>
    <property type="match status" value="1"/>
</dbReference>
<dbReference type="FunFam" id="3.50.50.60:FF:000002">
    <property type="entry name" value="tRNA uridine 5-carboxymethylaminomethyl modification enzyme MnmG"/>
    <property type="match status" value="1"/>
</dbReference>
<dbReference type="FunFam" id="3.50.50.60:FF:000010">
    <property type="entry name" value="tRNA uridine 5-carboxymethylaminomethyl modification enzyme MnmG"/>
    <property type="match status" value="1"/>
</dbReference>
<dbReference type="Gene3D" id="3.50.50.60">
    <property type="entry name" value="FAD/NAD(P)-binding domain"/>
    <property type="match status" value="2"/>
</dbReference>
<dbReference type="Gene3D" id="1.10.150.570">
    <property type="entry name" value="GidA associated domain, C-terminal subdomain"/>
    <property type="match status" value="1"/>
</dbReference>
<dbReference type="Gene3D" id="1.10.10.1800">
    <property type="entry name" value="tRNA uridine 5-carboxymethylaminomethyl modification enzyme MnmG/GidA"/>
    <property type="match status" value="1"/>
</dbReference>
<dbReference type="HAMAP" id="MF_00129">
    <property type="entry name" value="MnmG_GidA"/>
    <property type="match status" value="1"/>
</dbReference>
<dbReference type="InterPro" id="IPR036188">
    <property type="entry name" value="FAD/NAD-bd_sf"/>
</dbReference>
<dbReference type="InterPro" id="IPR049312">
    <property type="entry name" value="GIDA_C_N"/>
</dbReference>
<dbReference type="InterPro" id="IPR004416">
    <property type="entry name" value="MnmG"/>
</dbReference>
<dbReference type="InterPro" id="IPR002218">
    <property type="entry name" value="MnmG-rel"/>
</dbReference>
<dbReference type="InterPro" id="IPR020595">
    <property type="entry name" value="MnmG-rel_CS"/>
</dbReference>
<dbReference type="InterPro" id="IPR026904">
    <property type="entry name" value="MnmG_C"/>
</dbReference>
<dbReference type="InterPro" id="IPR047001">
    <property type="entry name" value="MnmG_C_subdom"/>
</dbReference>
<dbReference type="InterPro" id="IPR044920">
    <property type="entry name" value="MnmG_C_subdom_sf"/>
</dbReference>
<dbReference type="InterPro" id="IPR040131">
    <property type="entry name" value="MnmG_N"/>
</dbReference>
<dbReference type="NCBIfam" id="TIGR00136">
    <property type="entry name" value="mnmG_gidA"/>
    <property type="match status" value="1"/>
</dbReference>
<dbReference type="PANTHER" id="PTHR11806">
    <property type="entry name" value="GLUCOSE INHIBITED DIVISION PROTEIN A"/>
    <property type="match status" value="1"/>
</dbReference>
<dbReference type="PANTHER" id="PTHR11806:SF0">
    <property type="entry name" value="PROTEIN MTO1 HOMOLOG, MITOCHONDRIAL"/>
    <property type="match status" value="1"/>
</dbReference>
<dbReference type="Pfam" id="PF01134">
    <property type="entry name" value="GIDA"/>
    <property type="match status" value="1"/>
</dbReference>
<dbReference type="Pfam" id="PF21680">
    <property type="entry name" value="GIDA_C_1st"/>
    <property type="match status" value="1"/>
</dbReference>
<dbReference type="Pfam" id="PF13932">
    <property type="entry name" value="SAM_GIDA_C"/>
    <property type="match status" value="1"/>
</dbReference>
<dbReference type="SMART" id="SM01228">
    <property type="entry name" value="GIDA_assoc_3"/>
    <property type="match status" value="1"/>
</dbReference>
<dbReference type="SUPFAM" id="SSF51905">
    <property type="entry name" value="FAD/NAD(P)-binding domain"/>
    <property type="match status" value="1"/>
</dbReference>
<dbReference type="PROSITE" id="PS01280">
    <property type="entry name" value="GIDA_1"/>
    <property type="match status" value="1"/>
</dbReference>
<dbReference type="PROSITE" id="PS01281">
    <property type="entry name" value="GIDA_2"/>
    <property type="match status" value="1"/>
</dbReference>
<feature type="chain" id="PRO_1000095657" description="tRNA uridine 5-carboxymethylaminomethyl modification enzyme MnmG">
    <location>
        <begin position="1"/>
        <end position="632"/>
    </location>
</feature>
<feature type="binding site" evidence="1">
    <location>
        <begin position="13"/>
        <end position="18"/>
    </location>
    <ligand>
        <name>FAD</name>
        <dbReference type="ChEBI" id="CHEBI:57692"/>
    </ligand>
</feature>
<feature type="binding site" evidence="1">
    <location>
        <position position="125"/>
    </location>
    <ligand>
        <name>FAD</name>
        <dbReference type="ChEBI" id="CHEBI:57692"/>
    </ligand>
</feature>
<feature type="binding site" evidence="1">
    <location>
        <position position="180"/>
    </location>
    <ligand>
        <name>FAD</name>
        <dbReference type="ChEBI" id="CHEBI:57692"/>
    </ligand>
</feature>
<feature type="binding site" evidence="1">
    <location>
        <begin position="273"/>
        <end position="287"/>
    </location>
    <ligand>
        <name>NAD(+)</name>
        <dbReference type="ChEBI" id="CHEBI:57540"/>
    </ligand>
</feature>
<feature type="binding site" evidence="1">
    <location>
        <position position="370"/>
    </location>
    <ligand>
        <name>FAD</name>
        <dbReference type="ChEBI" id="CHEBI:57692"/>
    </ligand>
</feature>
<evidence type="ECO:0000255" key="1">
    <source>
        <dbReference type="HAMAP-Rule" id="MF_00129"/>
    </source>
</evidence>
<protein>
    <recommendedName>
        <fullName evidence="1">tRNA uridine 5-carboxymethylaminomethyl modification enzyme MnmG</fullName>
    </recommendedName>
    <alternativeName>
        <fullName evidence="1">Glucose-inhibited division protein A</fullName>
    </alternativeName>
</protein>
<keyword id="KW-0963">Cytoplasm</keyword>
<keyword id="KW-0274">FAD</keyword>
<keyword id="KW-0285">Flavoprotein</keyword>
<keyword id="KW-0520">NAD</keyword>
<keyword id="KW-1185">Reference proteome</keyword>
<keyword id="KW-0819">tRNA processing</keyword>
<accession>B4F0D8</accession>
<reference key="1">
    <citation type="journal article" date="2008" name="J. Bacteriol.">
        <title>Complete genome sequence of uropathogenic Proteus mirabilis, a master of both adherence and motility.</title>
        <authorList>
            <person name="Pearson M.M."/>
            <person name="Sebaihia M."/>
            <person name="Churcher C."/>
            <person name="Quail M.A."/>
            <person name="Seshasayee A.S."/>
            <person name="Luscombe N.M."/>
            <person name="Abdellah Z."/>
            <person name="Arrosmith C."/>
            <person name="Atkin B."/>
            <person name="Chillingworth T."/>
            <person name="Hauser H."/>
            <person name="Jagels K."/>
            <person name="Moule S."/>
            <person name="Mungall K."/>
            <person name="Norbertczak H."/>
            <person name="Rabbinowitsch E."/>
            <person name="Walker D."/>
            <person name="Whithead S."/>
            <person name="Thomson N.R."/>
            <person name="Rather P.N."/>
            <person name="Parkhill J."/>
            <person name="Mobley H.L.T."/>
        </authorList>
    </citation>
    <scope>NUCLEOTIDE SEQUENCE [LARGE SCALE GENOMIC DNA]</scope>
    <source>
        <strain>HI4320</strain>
    </source>
</reference>
<name>MNMG_PROMH</name>
<organism>
    <name type="scientific">Proteus mirabilis (strain HI4320)</name>
    <dbReference type="NCBI Taxonomy" id="529507"/>
    <lineage>
        <taxon>Bacteria</taxon>
        <taxon>Pseudomonadati</taxon>
        <taxon>Pseudomonadota</taxon>
        <taxon>Gammaproteobacteria</taxon>
        <taxon>Enterobacterales</taxon>
        <taxon>Morganellaceae</taxon>
        <taxon>Proteus</taxon>
    </lineage>
</organism>
<sequence length="632" mass="70643">MFYPEHFDVIVIGGGHAGTEAAMAAARMGRQTLLLTHNIDTLGQMSCNPAIGGIGKGHLVKEIDAMGGLMATAIDHAGIQFRTLNASKGPAVRATRAQADRVLYRQAIRTTLENQPNLMIFQQPVEDLIVENDQVTGAVTRMGLKFRAKAVVLTVGTFLDGKIHIGLENYSGGRAGDPPSVSLSHRLRELPLRVGRLKTGTPPRIDARTIDFSQLAPQLGDNPMPVFSFLGNVDQHPEQMPCHITHTNEQTHEIIRNNLERSPMYAGVIEGIGPRYCPSIEDKVMRFADRNSHQIFLEPEGLTSNEIYPNGISTSLPFDVQMQIVNSMKGMENAKIIRPGYAIEYDFFDPRDLKQTLESKFINGLFFAGQINGTTGYEEAAAQGLLAGLNAARYAFDQEGWFPRRDQAYIGVLVDDLCTLGTKEPYRMFTSRAEYRLMLREDNADLRLTEIGRELGMVDDNRWAQFSEKVELVEKERQRLRDIWVHPKADNLEEINQLLKTPLSKEANGEDLLRRPEMTYEILKKIPRFAPGIDDSRPQAAEQVEIQVKYEGYINRQQEEIEKQLRNESAALPIDIDYKQVSGLSNEVIAKLNDHKPTSIGQASRISGVTPAAISILLVWLKKQGLLRRSAS</sequence>
<gene>
    <name evidence="1" type="primary">mnmG</name>
    <name evidence="1" type="synonym">gidA</name>
    <name type="ordered locus">PMI3055</name>
</gene>
<comment type="function">
    <text evidence="1">NAD-binding protein involved in the addition of a carboxymethylaminomethyl (cmnm) group at the wobble position (U34) of certain tRNAs, forming tRNA-cmnm(5)s(2)U34.</text>
</comment>
<comment type="cofactor">
    <cofactor evidence="1">
        <name>FAD</name>
        <dbReference type="ChEBI" id="CHEBI:57692"/>
    </cofactor>
</comment>
<comment type="subunit">
    <text evidence="1">Homodimer. Heterotetramer of two MnmE and two MnmG subunits.</text>
</comment>
<comment type="subcellular location">
    <subcellularLocation>
        <location evidence="1">Cytoplasm</location>
    </subcellularLocation>
</comment>
<comment type="similarity">
    <text evidence="1">Belongs to the MnmG family.</text>
</comment>
<proteinExistence type="inferred from homology"/>